<organism>
    <name type="scientific">Cutibacterium acnes (strain DSM 16379 / KPA171202)</name>
    <name type="common">Propionibacterium acnes</name>
    <dbReference type="NCBI Taxonomy" id="267747"/>
    <lineage>
        <taxon>Bacteria</taxon>
        <taxon>Bacillati</taxon>
        <taxon>Actinomycetota</taxon>
        <taxon>Actinomycetes</taxon>
        <taxon>Propionibacteriales</taxon>
        <taxon>Propionibacteriaceae</taxon>
        <taxon>Cutibacterium</taxon>
    </lineage>
</organism>
<feature type="chain" id="PRO_0000228372" description="4-hydroxy-tetrahydrodipicolinate reductase">
    <location>
        <begin position="1"/>
        <end position="246"/>
    </location>
</feature>
<feature type="active site" description="Proton donor/acceptor" evidence="1">
    <location>
        <position position="131"/>
    </location>
</feature>
<feature type="active site" description="Proton donor" evidence="1">
    <location>
        <position position="135"/>
    </location>
</feature>
<feature type="binding site" evidence="1">
    <location>
        <begin position="8"/>
        <end position="13"/>
    </location>
    <ligand>
        <name>NAD(+)</name>
        <dbReference type="ChEBI" id="CHEBI:57540"/>
    </ligand>
</feature>
<feature type="binding site" evidence="1">
    <location>
        <begin position="74"/>
        <end position="76"/>
    </location>
    <ligand>
        <name>NAD(+)</name>
        <dbReference type="ChEBI" id="CHEBI:57540"/>
    </ligand>
</feature>
<feature type="binding site" evidence="1">
    <location>
        <begin position="101"/>
        <end position="104"/>
    </location>
    <ligand>
        <name>NAD(+)</name>
        <dbReference type="ChEBI" id="CHEBI:57540"/>
    </ligand>
</feature>
<feature type="binding site" evidence="1">
    <location>
        <position position="132"/>
    </location>
    <ligand>
        <name>(S)-2,3,4,5-tetrahydrodipicolinate</name>
        <dbReference type="ChEBI" id="CHEBI:16845"/>
    </ligand>
</feature>
<feature type="binding site" evidence="1">
    <location>
        <begin position="141"/>
        <end position="142"/>
    </location>
    <ligand>
        <name>(S)-2,3,4,5-tetrahydrodipicolinate</name>
        <dbReference type="ChEBI" id="CHEBI:16845"/>
    </ligand>
</feature>
<accession>Q6A7P7</accession>
<reference key="1">
    <citation type="journal article" date="2004" name="Science">
        <title>The complete genome sequence of Propionibacterium acnes, a commensal of human skin.</title>
        <authorList>
            <person name="Brueggemann H."/>
            <person name="Henne A."/>
            <person name="Hoster F."/>
            <person name="Liesegang H."/>
            <person name="Wiezer A."/>
            <person name="Strittmatter A."/>
            <person name="Hujer S."/>
            <person name="Duerre P."/>
            <person name="Gottschalk G."/>
        </authorList>
    </citation>
    <scope>NUCLEOTIDE SEQUENCE [LARGE SCALE GENOMIC DNA]</scope>
    <source>
        <strain>DSM 16379 / KPA171202</strain>
    </source>
</reference>
<evidence type="ECO:0000255" key="1">
    <source>
        <dbReference type="HAMAP-Rule" id="MF_00102"/>
    </source>
</evidence>
<evidence type="ECO:0000305" key="2"/>
<name>DAPB_CUTAK</name>
<protein>
    <recommendedName>
        <fullName evidence="1">4-hydroxy-tetrahydrodipicolinate reductase</fullName>
        <shortName evidence="1">HTPA reductase</shortName>
        <ecNumber evidence="1">1.17.1.8</ecNumber>
    </recommendedName>
</protein>
<dbReference type="EC" id="1.17.1.8" evidence="1"/>
<dbReference type="EMBL" id="AE017283">
    <property type="protein sequence ID" value="AAT83218.1"/>
    <property type="molecule type" value="Genomic_DNA"/>
</dbReference>
<dbReference type="RefSeq" id="WP_002516882.1">
    <property type="nucleotide sequence ID" value="NZ_CP025935.1"/>
</dbReference>
<dbReference type="SMR" id="Q6A7P7"/>
<dbReference type="EnsemblBacteria" id="AAT83218">
    <property type="protein sequence ID" value="AAT83218"/>
    <property type="gene ID" value="PPA1470"/>
</dbReference>
<dbReference type="GeneID" id="92857456"/>
<dbReference type="KEGG" id="pac:PPA1470"/>
<dbReference type="eggNOG" id="COG0289">
    <property type="taxonomic scope" value="Bacteria"/>
</dbReference>
<dbReference type="HOGENOM" id="CLU_047479_0_1_11"/>
<dbReference type="UniPathway" id="UPA00034">
    <property type="reaction ID" value="UER00018"/>
</dbReference>
<dbReference type="Proteomes" id="UP000000603">
    <property type="component" value="Chromosome"/>
</dbReference>
<dbReference type="GO" id="GO:0005829">
    <property type="term" value="C:cytosol"/>
    <property type="evidence" value="ECO:0007669"/>
    <property type="project" value="TreeGrafter"/>
</dbReference>
<dbReference type="GO" id="GO:0008839">
    <property type="term" value="F:4-hydroxy-tetrahydrodipicolinate reductase"/>
    <property type="evidence" value="ECO:0007669"/>
    <property type="project" value="UniProtKB-EC"/>
</dbReference>
<dbReference type="GO" id="GO:0051287">
    <property type="term" value="F:NAD binding"/>
    <property type="evidence" value="ECO:0007669"/>
    <property type="project" value="UniProtKB-UniRule"/>
</dbReference>
<dbReference type="GO" id="GO:0050661">
    <property type="term" value="F:NADP binding"/>
    <property type="evidence" value="ECO:0007669"/>
    <property type="project" value="UniProtKB-UniRule"/>
</dbReference>
<dbReference type="GO" id="GO:0016726">
    <property type="term" value="F:oxidoreductase activity, acting on CH or CH2 groups, NAD or NADP as acceptor"/>
    <property type="evidence" value="ECO:0007669"/>
    <property type="project" value="UniProtKB-UniRule"/>
</dbReference>
<dbReference type="GO" id="GO:0019877">
    <property type="term" value="P:diaminopimelate biosynthetic process"/>
    <property type="evidence" value="ECO:0007669"/>
    <property type="project" value="UniProtKB-UniRule"/>
</dbReference>
<dbReference type="GO" id="GO:0009089">
    <property type="term" value="P:lysine biosynthetic process via diaminopimelate"/>
    <property type="evidence" value="ECO:0007669"/>
    <property type="project" value="UniProtKB-UniRule"/>
</dbReference>
<dbReference type="CDD" id="cd02274">
    <property type="entry name" value="DHDPR_N"/>
    <property type="match status" value="1"/>
</dbReference>
<dbReference type="FunFam" id="3.30.360.10:FF:000009">
    <property type="entry name" value="4-hydroxy-tetrahydrodipicolinate reductase"/>
    <property type="match status" value="1"/>
</dbReference>
<dbReference type="Gene3D" id="3.30.360.10">
    <property type="entry name" value="Dihydrodipicolinate Reductase, domain 2"/>
    <property type="match status" value="1"/>
</dbReference>
<dbReference type="Gene3D" id="3.40.50.720">
    <property type="entry name" value="NAD(P)-binding Rossmann-like Domain"/>
    <property type="match status" value="1"/>
</dbReference>
<dbReference type="HAMAP" id="MF_00102">
    <property type="entry name" value="DapB"/>
    <property type="match status" value="1"/>
</dbReference>
<dbReference type="InterPro" id="IPR022663">
    <property type="entry name" value="DapB_C"/>
</dbReference>
<dbReference type="InterPro" id="IPR000846">
    <property type="entry name" value="DapB_N"/>
</dbReference>
<dbReference type="InterPro" id="IPR022664">
    <property type="entry name" value="DapB_N_CS"/>
</dbReference>
<dbReference type="InterPro" id="IPR023940">
    <property type="entry name" value="DHDPR_bac"/>
</dbReference>
<dbReference type="InterPro" id="IPR036291">
    <property type="entry name" value="NAD(P)-bd_dom_sf"/>
</dbReference>
<dbReference type="NCBIfam" id="TIGR00036">
    <property type="entry name" value="dapB"/>
    <property type="match status" value="1"/>
</dbReference>
<dbReference type="PANTHER" id="PTHR20836:SF0">
    <property type="entry name" value="4-HYDROXY-TETRAHYDRODIPICOLINATE REDUCTASE 1, CHLOROPLASTIC-RELATED"/>
    <property type="match status" value="1"/>
</dbReference>
<dbReference type="PANTHER" id="PTHR20836">
    <property type="entry name" value="DIHYDRODIPICOLINATE REDUCTASE"/>
    <property type="match status" value="1"/>
</dbReference>
<dbReference type="Pfam" id="PF05173">
    <property type="entry name" value="DapB_C"/>
    <property type="match status" value="1"/>
</dbReference>
<dbReference type="Pfam" id="PF01113">
    <property type="entry name" value="DapB_N"/>
    <property type="match status" value="1"/>
</dbReference>
<dbReference type="PIRSF" id="PIRSF000161">
    <property type="entry name" value="DHPR"/>
    <property type="match status" value="1"/>
</dbReference>
<dbReference type="SUPFAM" id="SSF55347">
    <property type="entry name" value="Glyceraldehyde-3-phosphate dehydrogenase-like, C-terminal domain"/>
    <property type="match status" value="1"/>
</dbReference>
<dbReference type="SUPFAM" id="SSF51735">
    <property type="entry name" value="NAD(P)-binding Rossmann-fold domains"/>
    <property type="match status" value="1"/>
</dbReference>
<dbReference type="PROSITE" id="PS01298">
    <property type="entry name" value="DAPB"/>
    <property type="match status" value="1"/>
</dbReference>
<proteinExistence type="inferred from homology"/>
<sequence length="246" mass="25944">MIKVAVFGAKGRMGTAVCQAVEEAEDTELVAAVDSGGDRSDASGADVIVDFTTPDAVMDNLSWAISHDINTVVGTTGFDDERYQVLRDQLADHPNIGCLVAPNFSIGAVLMMHFAEQAARFYESAEIVELHHPNKVDAPSGTARTTATKIAAARQEAGLGEVPDATKSQLNGARGAVVEGVHVHSVRLRGLVAHQEVLFGAEGETLTIRHDSMDRVSFMSGVLTGVRGVLDRPGLTVGIEGLLGLE</sequence>
<gene>
    <name evidence="1" type="primary">dapB</name>
    <name type="ordered locus">PPA1470</name>
</gene>
<comment type="function">
    <text evidence="1">Catalyzes the conversion of 4-hydroxy-tetrahydrodipicolinate (HTPA) to tetrahydrodipicolinate.</text>
</comment>
<comment type="catalytic activity">
    <reaction evidence="1">
        <text>(S)-2,3,4,5-tetrahydrodipicolinate + NAD(+) + H2O = (2S,4S)-4-hydroxy-2,3,4,5-tetrahydrodipicolinate + NADH + H(+)</text>
        <dbReference type="Rhea" id="RHEA:35323"/>
        <dbReference type="ChEBI" id="CHEBI:15377"/>
        <dbReference type="ChEBI" id="CHEBI:15378"/>
        <dbReference type="ChEBI" id="CHEBI:16845"/>
        <dbReference type="ChEBI" id="CHEBI:57540"/>
        <dbReference type="ChEBI" id="CHEBI:57945"/>
        <dbReference type="ChEBI" id="CHEBI:67139"/>
        <dbReference type="EC" id="1.17.1.8"/>
    </reaction>
</comment>
<comment type="catalytic activity">
    <reaction evidence="1">
        <text>(S)-2,3,4,5-tetrahydrodipicolinate + NADP(+) + H2O = (2S,4S)-4-hydroxy-2,3,4,5-tetrahydrodipicolinate + NADPH + H(+)</text>
        <dbReference type="Rhea" id="RHEA:35331"/>
        <dbReference type="ChEBI" id="CHEBI:15377"/>
        <dbReference type="ChEBI" id="CHEBI:15378"/>
        <dbReference type="ChEBI" id="CHEBI:16845"/>
        <dbReference type="ChEBI" id="CHEBI:57783"/>
        <dbReference type="ChEBI" id="CHEBI:58349"/>
        <dbReference type="ChEBI" id="CHEBI:67139"/>
        <dbReference type="EC" id="1.17.1.8"/>
    </reaction>
</comment>
<comment type="pathway">
    <text evidence="1">Amino-acid biosynthesis; L-lysine biosynthesis via DAP pathway; (S)-tetrahydrodipicolinate from L-aspartate: step 4/4.</text>
</comment>
<comment type="subcellular location">
    <subcellularLocation>
        <location evidence="1">Cytoplasm</location>
    </subcellularLocation>
</comment>
<comment type="similarity">
    <text evidence="1">Belongs to the DapB family.</text>
</comment>
<comment type="caution">
    <text evidence="2">Was originally thought to be a dihydrodipicolinate reductase (DHDPR), catalyzing the conversion of dihydrodipicolinate to tetrahydrodipicolinate. However, it was shown in E.coli that the substrate of the enzymatic reaction is not dihydrodipicolinate (DHDP) but in fact (2S,4S)-4-hydroxy-2,3,4,5-tetrahydrodipicolinic acid (HTPA), the product released by the DapA-catalyzed reaction.</text>
</comment>
<keyword id="KW-0028">Amino-acid biosynthesis</keyword>
<keyword id="KW-0963">Cytoplasm</keyword>
<keyword id="KW-0220">Diaminopimelate biosynthesis</keyword>
<keyword id="KW-0457">Lysine biosynthesis</keyword>
<keyword id="KW-0520">NAD</keyword>
<keyword id="KW-0521">NADP</keyword>
<keyword id="KW-0560">Oxidoreductase</keyword>